<reference evidence="5" key="1">
    <citation type="journal article" date="2012" name="Syst. Biol.">
        <title>Peptidomics-based phylogeny and biogeography of Mantophasmatodea (Hexapoda).</title>
        <authorList>
            <person name="Predel R."/>
            <person name="Neupert S."/>
            <person name="Huetteroth W."/>
            <person name="Kahnt J."/>
            <person name="Waidelich D."/>
            <person name="Roth S."/>
        </authorList>
    </citation>
    <scope>PROTEIN SEQUENCE</scope>
    <scope>PYROGLUTAMATE FORMATION AT GLN-1</scope>
    <scope>AMIDATION AT TRP-8</scope>
    <source>
        <tissue evidence="3">Corpora cardiaca</tissue>
    </source>
</reference>
<accession>B3A0K9</accession>
<evidence type="ECO:0000250" key="1">
    <source>
        <dbReference type="UniProtKB" id="P55319"/>
    </source>
</evidence>
<evidence type="ECO:0000255" key="2"/>
<evidence type="ECO:0000269" key="3">
    <source>
    </source>
</evidence>
<evidence type="ECO:0000303" key="4">
    <source>
    </source>
</evidence>
<evidence type="ECO:0000305" key="5"/>
<evidence type="ECO:0000305" key="6">
    <source>
    </source>
</evidence>
<proteinExistence type="evidence at protein level"/>
<dbReference type="GO" id="GO:0005576">
    <property type="term" value="C:extracellular region"/>
    <property type="evidence" value="ECO:0007669"/>
    <property type="project" value="UniProtKB-SubCell"/>
</dbReference>
<dbReference type="GO" id="GO:0005179">
    <property type="term" value="F:hormone activity"/>
    <property type="evidence" value="ECO:0007669"/>
    <property type="project" value="UniProtKB-KW"/>
</dbReference>
<dbReference type="GO" id="GO:0007629">
    <property type="term" value="P:flight behavior"/>
    <property type="evidence" value="ECO:0007669"/>
    <property type="project" value="UniProtKB-KW"/>
</dbReference>
<dbReference type="GO" id="GO:0007218">
    <property type="term" value="P:neuropeptide signaling pathway"/>
    <property type="evidence" value="ECO:0007669"/>
    <property type="project" value="UniProtKB-KW"/>
</dbReference>
<dbReference type="InterPro" id="IPR002047">
    <property type="entry name" value="Adipokinetic_hormone_CS"/>
</dbReference>
<dbReference type="PROSITE" id="PS00256">
    <property type="entry name" value="AKH"/>
    <property type="match status" value="1"/>
</dbReference>
<protein>
    <recommendedName>
        <fullName evidence="4">Adipokinetic hormone</fullName>
        <shortName evidence="4">AKH</shortName>
    </recommendedName>
</protein>
<keyword id="KW-0027">Amidation</keyword>
<keyword id="KW-0903">Direct protein sequencing</keyword>
<keyword id="KW-0286">Flight</keyword>
<keyword id="KW-0372">Hormone</keyword>
<keyword id="KW-0527">Neuropeptide</keyword>
<keyword id="KW-0873">Pyrrolidone carboxylic acid</keyword>
<keyword id="KW-0964">Secreted</keyword>
<organism>
    <name type="scientific">Pachyphasma brandbergense</name>
    <name type="common">Gladiator</name>
    <name type="synonym">Heel-walker</name>
    <dbReference type="NCBI Taxonomy" id="1041430"/>
    <lineage>
        <taxon>Eukaryota</taxon>
        <taxon>Metazoa</taxon>
        <taxon>Ecdysozoa</taxon>
        <taxon>Arthropoda</taxon>
        <taxon>Hexapoda</taxon>
        <taxon>Insecta</taxon>
        <taxon>Pterygota</taxon>
        <taxon>Neoptera</taxon>
        <taxon>Polyneoptera</taxon>
        <taxon>Mantophasmatodea</taxon>
        <taxon>Mantophasmatidae</taxon>
        <taxon>Pachyphasma</taxon>
    </lineage>
</organism>
<comment type="function">
    <text evidence="1">This hormone, released from cells in the corpora cardiaca, causes release of diglycerides from the fat body and stimulation of muscles to use these diglycerides as an energy source during energy-demanding processes.</text>
</comment>
<comment type="subcellular location">
    <subcellularLocation>
        <location evidence="6">Secreted</location>
    </subcellularLocation>
</comment>
<comment type="similarity">
    <text evidence="2">Belongs to the AKH/HRTH/RPCH family.</text>
</comment>
<name>AKH_PACBA</name>
<feature type="peptide" id="PRO_0000421657" description="Adipokinetic hormone" evidence="3">
    <location>
        <begin position="1"/>
        <end position="8"/>
    </location>
</feature>
<feature type="modified residue" description="Pyrrolidone carboxylic acid" evidence="3">
    <location>
        <position position="1"/>
    </location>
</feature>
<feature type="modified residue" description="Tryptophan amide" evidence="3">
    <location>
        <position position="8"/>
    </location>
</feature>
<sequence>QVNFSPGW</sequence>